<dbReference type="EMBL" id="AF031924">
    <property type="protein sequence ID" value="AAC04705.1"/>
    <property type="status" value="ALT_SEQ"/>
    <property type="molecule type" value="mRNA"/>
</dbReference>
<dbReference type="EMBL" id="AF171222">
    <property type="protein sequence ID" value="AAF09453.1"/>
    <property type="status" value="ALT_SEQ"/>
    <property type="molecule type" value="Genomic_DNA"/>
</dbReference>
<dbReference type="EMBL" id="AF171219">
    <property type="protein sequence ID" value="AAF09453.1"/>
    <property type="status" value="JOINED"/>
    <property type="molecule type" value="Genomic_DNA"/>
</dbReference>
<dbReference type="EMBL" id="AF171220">
    <property type="protein sequence ID" value="AAF09453.1"/>
    <property type="status" value="JOINED"/>
    <property type="molecule type" value="Genomic_DNA"/>
</dbReference>
<dbReference type="EMBL" id="AF171221">
    <property type="protein sequence ID" value="AAF09453.1"/>
    <property type="status" value="JOINED"/>
    <property type="molecule type" value="Genomic_DNA"/>
</dbReference>
<dbReference type="EMBL" id="AJ243512">
    <property type="protein sequence ID" value="CAB50736.1"/>
    <property type="molecule type" value="mRNA"/>
</dbReference>
<dbReference type="EMBL" id="AP003775">
    <property type="status" value="NOT_ANNOTATED_CDS"/>
    <property type="molecule type" value="Genomic_DNA"/>
</dbReference>
<dbReference type="EMBL" id="CH471065">
    <property type="protein sequence ID" value="EAW67743.1"/>
    <property type="molecule type" value="Genomic_DNA"/>
</dbReference>
<dbReference type="EMBL" id="BC069378">
    <property type="protein sequence ID" value="AAH69378.1"/>
    <property type="molecule type" value="mRNA"/>
</dbReference>
<dbReference type="EMBL" id="BC111432">
    <property type="protein sequence ID" value="AAI11433.1"/>
    <property type="molecule type" value="mRNA"/>
</dbReference>
<dbReference type="EMBL" id="BC111572">
    <property type="protein sequence ID" value="AAI11573.1"/>
    <property type="molecule type" value="mRNA"/>
</dbReference>
<dbReference type="CCDS" id="CCDS8481.1"/>
<dbReference type="RefSeq" id="NP_003649.2">
    <property type="nucleotide sequence ID" value="NM_003658.4"/>
</dbReference>
<dbReference type="SMR" id="Q9UMQ3"/>
<dbReference type="BioGRID" id="114108">
    <property type="interactions" value="3"/>
</dbReference>
<dbReference type="FunCoup" id="Q9UMQ3">
    <property type="interactions" value="1295"/>
</dbReference>
<dbReference type="IntAct" id="Q9UMQ3">
    <property type="interactions" value="2"/>
</dbReference>
<dbReference type="STRING" id="9606.ENSP00000281437"/>
<dbReference type="GlyGen" id="Q9UMQ3">
    <property type="glycosylation" value="1 site, 1 O-linked glycan (1 site)"/>
</dbReference>
<dbReference type="iPTMnet" id="Q9UMQ3"/>
<dbReference type="PhosphoSitePlus" id="Q9UMQ3"/>
<dbReference type="BioMuta" id="BARX2"/>
<dbReference type="DMDM" id="254763427"/>
<dbReference type="jPOST" id="Q9UMQ3"/>
<dbReference type="MassIVE" id="Q9UMQ3"/>
<dbReference type="PaxDb" id="9606-ENSP00000281437"/>
<dbReference type="PeptideAtlas" id="Q9UMQ3"/>
<dbReference type="ProteomicsDB" id="85192"/>
<dbReference type="Antibodypedia" id="19208">
    <property type="antibodies" value="85 antibodies from 18 providers"/>
</dbReference>
<dbReference type="DNASU" id="8538"/>
<dbReference type="Ensembl" id="ENST00000281437.6">
    <property type="protein sequence ID" value="ENSP00000281437.4"/>
    <property type="gene ID" value="ENSG00000043039.7"/>
</dbReference>
<dbReference type="GeneID" id="8538"/>
<dbReference type="KEGG" id="hsa:8538"/>
<dbReference type="MANE-Select" id="ENST00000281437.6">
    <property type="protein sequence ID" value="ENSP00000281437.4"/>
    <property type="RefSeq nucleotide sequence ID" value="NM_003658.5"/>
    <property type="RefSeq protein sequence ID" value="NP_003649.2"/>
</dbReference>
<dbReference type="UCSC" id="uc001qfc.5">
    <property type="organism name" value="human"/>
</dbReference>
<dbReference type="AGR" id="HGNC:956"/>
<dbReference type="CTD" id="8538"/>
<dbReference type="DisGeNET" id="8538"/>
<dbReference type="GeneCards" id="BARX2"/>
<dbReference type="HGNC" id="HGNC:956">
    <property type="gene designation" value="BARX2"/>
</dbReference>
<dbReference type="HPA" id="ENSG00000043039">
    <property type="expression patterns" value="Tissue enhanced (esophagus, salivary gland, vagina)"/>
</dbReference>
<dbReference type="MIM" id="604823">
    <property type="type" value="gene"/>
</dbReference>
<dbReference type="neXtProt" id="NX_Q9UMQ3"/>
<dbReference type="OpenTargets" id="ENSG00000043039"/>
<dbReference type="PharmGKB" id="PA25260"/>
<dbReference type="VEuPathDB" id="HostDB:ENSG00000043039"/>
<dbReference type="eggNOG" id="KOG0488">
    <property type="taxonomic scope" value="Eukaryota"/>
</dbReference>
<dbReference type="GeneTree" id="ENSGT00940000159663"/>
<dbReference type="HOGENOM" id="CLU_090214_0_0_1"/>
<dbReference type="InParanoid" id="Q9UMQ3"/>
<dbReference type="OMA" id="AQEPKAH"/>
<dbReference type="OrthoDB" id="6159439at2759"/>
<dbReference type="PAN-GO" id="Q9UMQ3">
    <property type="GO annotations" value="4 GO annotations based on evolutionary models"/>
</dbReference>
<dbReference type="PhylomeDB" id="Q9UMQ3"/>
<dbReference type="TreeFam" id="TF350735"/>
<dbReference type="PathwayCommons" id="Q9UMQ3"/>
<dbReference type="SignaLink" id="Q9UMQ3"/>
<dbReference type="BioGRID-ORCS" id="8538">
    <property type="hits" value="11 hits in 1171 CRISPR screens"/>
</dbReference>
<dbReference type="ChiTaRS" id="BARX2">
    <property type="organism name" value="human"/>
</dbReference>
<dbReference type="GenomeRNAi" id="8538"/>
<dbReference type="Pharos" id="Q9UMQ3">
    <property type="development level" value="Tbio"/>
</dbReference>
<dbReference type="PRO" id="PR:Q9UMQ3"/>
<dbReference type="Proteomes" id="UP000005640">
    <property type="component" value="Chromosome 11"/>
</dbReference>
<dbReference type="RNAct" id="Q9UMQ3">
    <property type="molecule type" value="protein"/>
</dbReference>
<dbReference type="Bgee" id="ENSG00000043039">
    <property type="expression patterns" value="Expressed in lower esophagus mucosa and 118 other cell types or tissues"/>
</dbReference>
<dbReference type="GO" id="GO:0015629">
    <property type="term" value="C:actin cytoskeleton"/>
    <property type="evidence" value="ECO:0000314"/>
    <property type="project" value="HPA"/>
</dbReference>
<dbReference type="GO" id="GO:0000785">
    <property type="term" value="C:chromatin"/>
    <property type="evidence" value="ECO:0000247"/>
    <property type="project" value="NTNU_SB"/>
</dbReference>
<dbReference type="GO" id="GO:0005829">
    <property type="term" value="C:cytosol"/>
    <property type="evidence" value="ECO:0000314"/>
    <property type="project" value="HPA"/>
</dbReference>
<dbReference type="GO" id="GO:0005794">
    <property type="term" value="C:Golgi apparatus"/>
    <property type="evidence" value="ECO:0000314"/>
    <property type="project" value="HPA"/>
</dbReference>
<dbReference type="GO" id="GO:0005654">
    <property type="term" value="C:nucleoplasm"/>
    <property type="evidence" value="ECO:0000314"/>
    <property type="project" value="HPA"/>
</dbReference>
<dbReference type="GO" id="GO:0005634">
    <property type="term" value="C:nucleus"/>
    <property type="evidence" value="ECO:0000318"/>
    <property type="project" value="GO_Central"/>
</dbReference>
<dbReference type="GO" id="GO:0005667">
    <property type="term" value="C:transcription regulator complex"/>
    <property type="evidence" value="ECO:0007669"/>
    <property type="project" value="Ensembl"/>
</dbReference>
<dbReference type="GO" id="GO:0003682">
    <property type="term" value="F:chromatin binding"/>
    <property type="evidence" value="ECO:0007669"/>
    <property type="project" value="Ensembl"/>
</dbReference>
<dbReference type="GO" id="GO:0003677">
    <property type="term" value="F:DNA binding"/>
    <property type="evidence" value="ECO:0000314"/>
    <property type="project" value="MGI"/>
</dbReference>
<dbReference type="GO" id="GO:0001228">
    <property type="term" value="F:DNA-binding transcription activator activity, RNA polymerase II-specific"/>
    <property type="evidence" value="ECO:0000315"/>
    <property type="project" value="NTNU_SB"/>
</dbReference>
<dbReference type="GO" id="GO:0000981">
    <property type="term" value="F:DNA-binding transcription factor activity, RNA polymerase II-specific"/>
    <property type="evidence" value="ECO:0000247"/>
    <property type="project" value="NTNU_SB"/>
</dbReference>
<dbReference type="GO" id="GO:0000977">
    <property type="term" value="F:RNA polymerase II transcription regulatory region sequence-specific DNA binding"/>
    <property type="evidence" value="ECO:0000315"/>
    <property type="project" value="NTNU_SB"/>
</dbReference>
<dbReference type="GO" id="GO:1990837">
    <property type="term" value="F:sequence-specific double-stranded DNA binding"/>
    <property type="evidence" value="ECO:0000314"/>
    <property type="project" value="ARUK-UCL"/>
</dbReference>
<dbReference type="GO" id="GO:0001502">
    <property type="term" value="P:cartilage condensation"/>
    <property type="evidence" value="ECO:0007669"/>
    <property type="project" value="Ensembl"/>
</dbReference>
<dbReference type="GO" id="GO:0014902">
    <property type="term" value="P:myotube differentiation"/>
    <property type="evidence" value="ECO:0007669"/>
    <property type="project" value="Ensembl"/>
</dbReference>
<dbReference type="GO" id="GO:0000122">
    <property type="term" value="P:negative regulation of transcription by RNA polymerase II"/>
    <property type="evidence" value="ECO:0007669"/>
    <property type="project" value="Ensembl"/>
</dbReference>
<dbReference type="GO" id="GO:0045944">
    <property type="term" value="P:positive regulation of transcription by RNA polymerase II"/>
    <property type="evidence" value="ECO:0000315"/>
    <property type="project" value="NTNU_SB"/>
</dbReference>
<dbReference type="GO" id="GO:0006357">
    <property type="term" value="P:regulation of transcription by RNA polymerase II"/>
    <property type="evidence" value="ECO:0000318"/>
    <property type="project" value="GO_Central"/>
</dbReference>
<dbReference type="GO" id="GO:0035914">
    <property type="term" value="P:skeletal muscle cell differentiation"/>
    <property type="evidence" value="ECO:0007669"/>
    <property type="project" value="Ensembl"/>
</dbReference>
<dbReference type="GO" id="GO:0006366">
    <property type="term" value="P:transcription by RNA polymerase II"/>
    <property type="evidence" value="ECO:0007669"/>
    <property type="project" value="Ensembl"/>
</dbReference>
<dbReference type="CDD" id="cd00086">
    <property type="entry name" value="homeodomain"/>
    <property type="match status" value="1"/>
</dbReference>
<dbReference type="FunFam" id="1.10.10.60:FF:000103">
    <property type="entry name" value="Homeobox protein BarH-like 2"/>
    <property type="match status" value="1"/>
</dbReference>
<dbReference type="Gene3D" id="1.10.10.60">
    <property type="entry name" value="Homeodomain-like"/>
    <property type="match status" value="1"/>
</dbReference>
<dbReference type="InterPro" id="IPR001356">
    <property type="entry name" value="HD"/>
</dbReference>
<dbReference type="InterPro" id="IPR020479">
    <property type="entry name" value="HD_metazoa"/>
</dbReference>
<dbReference type="InterPro" id="IPR017970">
    <property type="entry name" value="Homeobox_CS"/>
</dbReference>
<dbReference type="InterPro" id="IPR050848">
    <property type="entry name" value="Homeobox_TF"/>
</dbReference>
<dbReference type="InterPro" id="IPR009057">
    <property type="entry name" value="Homeodomain-like_sf"/>
</dbReference>
<dbReference type="InterPro" id="IPR000047">
    <property type="entry name" value="HTH_motif"/>
</dbReference>
<dbReference type="PANTHER" id="PTHR24333:SF15">
    <property type="entry name" value="BARX HOMEOBOX 2"/>
    <property type="match status" value="1"/>
</dbReference>
<dbReference type="PANTHER" id="PTHR24333">
    <property type="entry name" value="HOMEO BOX HB9 LIKE A-RELATED"/>
    <property type="match status" value="1"/>
</dbReference>
<dbReference type="Pfam" id="PF00046">
    <property type="entry name" value="Homeodomain"/>
    <property type="match status" value="1"/>
</dbReference>
<dbReference type="PRINTS" id="PR00024">
    <property type="entry name" value="HOMEOBOX"/>
</dbReference>
<dbReference type="PRINTS" id="PR00031">
    <property type="entry name" value="HTHREPRESSR"/>
</dbReference>
<dbReference type="SMART" id="SM00389">
    <property type="entry name" value="HOX"/>
    <property type="match status" value="1"/>
</dbReference>
<dbReference type="SUPFAM" id="SSF46689">
    <property type="entry name" value="Homeodomain-like"/>
    <property type="match status" value="1"/>
</dbReference>
<dbReference type="PROSITE" id="PS00027">
    <property type="entry name" value="HOMEOBOX_1"/>
    <property type="match status" value="1"/>
</dbReference>
<dbReference type="PROSITE" id="PS50071">
    <property type="entry name" value="HOMEOBOX_2"/>
    <property type="match status" value="1"/>
</dbReference>
<gene>
    <name type="primary">BARX2</name>
</gene>
<proteinExistence type="evidence at protein level"/>
<comment type="function">
    <text evidence="1">Transcription factor. Binds optimally to the DNA consensus sequence 5'-YYTAATGRTTTTY-3'. May control the expression of neural adhesion molecules such as L1 or Ng-CAM during embryonic development of both the central and peripherical nervous system. May be involved in controlling adhesive processes in keratinizing epithelia (By similarity).</text>
</comment>
<comment type="interaction">
    <interactant intactId="EBI-12053927">
        <id>Q9UMQ3</id>
    </interactant>
    <interactant intactId="EBI-701903">
        <id>Q14192</id>
        <label>FHL2</label>
    </interactant>
    <organismsDiffer>false</organismsDiffer>
    <experiments>3</experiments>
</comment>
<comment type="interaction">
    <interactant intactId="EBI-12053927">
        <id>Q9UMQ3</id>
    </interactant>
    <interactant intactId="EBI-741101">
        <id>Q13643</id>
        <label>FHL3</label>
    </interactant>
    <organismsDiffer>false</organismsDiffer>
    <experiments>3</experiments>
</comment>
<comment type="subcellular location">
    <subcellularLocation>
        <location>Nucleus</location>
    </subcellularLocation>
</comment>
<comment type="tissue specificity">
    <text>Highly expressed in adult salivary gland and at much lower levels in mammary gland, kidney and placenta.</text>
</comment>
<comment type="similarity">
    <text evidence="4">Belongs to the BAR homeobox family.</text>
</comment>
<comment type="sequence caution" evidence="4">
    <conflict type="erroneous initiation">
        <sequence resource="EMBL-CDS" id="AAC04705"/>
    </conflict>
    <text>Truncated N-terminus.</text>
</comment>
<comment type="sequence caution" evidence="4">
    <conflict type="frameshift">
        <sequence resource="EMBL-CDS" id="AAC04705"/>
    </conflict>
</comment>
<comment type="sequence caution" evidence="4">
    <conflict type="erroneous initiation">
        <sequence resource="EMBL-CDS" id="AAF09453"/>
    </conflict>
    <text>Truncated N-terminus.</text>
</comment>
<comment type="sequence caution" evidence="4">
    <conflict type="frameshift">
        <sequence resource="EMBL-CDS" id="AAF09453"/>
    </conflict>
</comment>
<keyword id="KW-0238">DNA-binding</keyword>
<keyword id="KW-0371">Homeobox</keyword>
<keyword id="KW-0539">Nucleus</keyword>
<keyword id="KW-1267">Proteomics identification</keyword>
<keyword id="KW-1185">Reference proteome</keyword>
<keyword id="KW-0804">Transcription</keyword>
<keyword id="KW-0805">Transcription regulation</keyword>
<protein>
    <recommendedName>
        <fullName>Homeobox protein BarH-like 2</fullName>
    </recommendedName>
</protein>
<reference key="1">
    <citation type="journal article" date="2000" name="Gene">
        <title>Cloning and chromosomal localization of the human BARX2 homeobox protein gene.</title>
        <authorList>
            <person name="Krasner A."/>
            <person name="Wallace L."/>
            <person name="Thiagalingam A."/>
            <person name="Jones C."/>
            <person name="Lengauer C."/>
            <person name="Minahan L."/>
            <person name="Ma Y."/>
            <person name="Kalikin L."/>
            <person name="Feinberg A.P."/>
            <person name="Jabs E.W."/>
            <person name="Tunnacliffe A."/>
            <person name="Baylin S.B."/>
            <person name="Ball D.W."/>
            <person name="Nelkin B.D."/>
        </authorList>
    </citation>
    <scope>NUCLEOTIDE SEQUENCE [MRNA]</scope>
</reference>
<reference key="2">
    <citation type="journal article" date="1999" name="Genomics">
        <title>The human BARX2 gene: genomic structure, chromosomal localization, and single nucleotide polymorphisms.</title>
        <authorList>
            <person name="Hjalt T.A."/>
            <person name="Murray J.C."/>
        </authorList>
    </citation>
    <scope>NUCLEOTIDE SEQUENCE [GENOMIC DNA]</scope>
</reference>
<reference key="3">
    <citation type="submission" date="1999-07" db="EMBL/GenBank/DDBJ databases">
        <title>Expression cloning of the human version of Barx2 as a cAMP response element binding protein- (CREB)- interacting factor.</title>
        <authorList>
            <person name="Lindon C."/>
            <person name="Goodbourn S."/>
        </authorList>
    </citation>
    <scope>NUCLEOTIDE SEQUENCE [MRNA]</scope>
    <source>
        <tissue>Colon</tissue>
    </source>
</reference>
<reference key="4">
    <citation type="journal article" date="2006" name="Nature">
        <title>Human chromosome 11 DNA sequence and analysis including novel gene identification.</title>
        <authorList>
            <person name="Taylor T.D."/>
            <person name="Noguchi H."/>
            <person name="Totoki Y."/>
            <person name="Toyoda A."/>
            <person name="Kuroki Y."/>
            <person name="Dewar K."/>
            <person name="Lloyd C."/>
            <person name="Itoh T."/>
            <person name="Takeda T."/>
            <person name="Kim D.-W."/>
            <person name="She X."/>
            <person name="Barlow K.F."/>
            <person name="Bloom T."/>
            <person name="Bruford E."/>
            <person name="Chang J.L."/>
            <person name="Cuomo C.A."/>
            <person name="Eichler E."/>
            <person name="FitzGerald M.G."/>
            <person name="Jaffe D.B."/>
            <person name="LaButti K."/>
            <person name="Nicol R."/>
            <person name="Park H.-S."/>
            <person name="Seaman C."/>
            <person name="Sougnez C."/>
            <person name="Yang X."/>
            <person name="Zimmer A.R."/>
            <person name="Zody M.C."/>
            <person name="Birren B.W."/>
            <person name="Nusbaum C."/>
            <person name="Fujiyama A."/>
            <person name="Hattori M."/>
            <person name="Rogers J."/>
            <person name="Lander E.S."/>
            <person name="Sakaki Y."/>
        </authorList>
    </citation>
    <scope>NUCLEOTIDE SEQUENCE [LARGE SCALE GENOMIC DNA]</scope>
</reference>
<reference key="5">
    <citation type="submission" date="2005-07" db="EMBL/GenBank/DDBJ databases">
        <authorList>
            <person name="Mural R.J."/>
            <person name="Istrail S."/>
            <person name="Sutton G.G."/>
            <person name="Florea L."/>
            <person name="Halpern A.L."/>
            <person name="Mobarry C.M."/>
            <person name="Lippert R."/>
            <person name="Walenz B."/>
            <person name="Shatkay H."/>
            <person name="Dew I."/>
            <person name="Miller J.R."/>
            <person name="Flanigan M.J."/>
            <person name="Edwards N.J."/>
            <person name="Bolanos R."/>
            <person name="Fasulo D."/>
            <person name="Halldorsson B.V."/>
            <person name="Hannenhalli S."/>
            <person name="Turner R."/>
            <person name="Yooseph S."/>
            <person name="Lu F."/>
            <person name="Nusskern D.R."/>
            <person name="Shue B.C."/>
            <person name="Zheng X.H."/>
            <person name="Zhong F."/>
            <person name="Delcher A.L."/>
            <person name="Huson D.H."/>
            <person name="Kravitz S.A."/>
            <person name="Mouchard L."/>
            <person name="Reinert K."/>
            <person name="Remington K.A."/>
            <person name="Clark A.G."/>
            <person name="Waterman M.S."/>
            <person name="Eichler E.E."/>
            <person name="Adams M.D."/>
            <person name="Hunkapiller M.W."/>
            <person name="Myers E.W."/>
            <person name="Venter J.C."/>
        </authorList>
    </citation>
    <scope>NUCLEOTIDE SEQUENCE [LARGE SCALE GENOMIC DNA]</scope>
</reference>
<reference key="6">
    <citation type="journal article" date="2004" name="Genome Res.">
        <title>The status, quality, and expansion of the NIH full-length cDNA project: the Mammalian Gene Collection (MGC).</title>
        <authorList>
            <consortium name="The MGC Project Team"/>
        </authorList>
    </citation>
    <scope>NUCLEOTIDE SEQUENCE [LARGE SCALE MRNA]</scope>
</reference>
<organism>
    <name type="scientific">Homo sapiens</name>
    <name type="common">Human</name>
    <dbReference type="NCBI Taxonomy" id="9606"/>
    <lineage>
        <taxon>Eukaryota</taxon>
        <taxon>Metazoa</taxon>
        <taxon>Chordata</taxon>
        <taxon>Craniata</taxon>
        <taxon>Vertebrata</taxon>
        <taxon>Euteleostomi</taxon>
        <taxon>Mammalia</taxon>
        <taxon>Eutheria</taxon>
        <taxon>Euarchontoglires</taxon>
        <taxon>Primates</taxon>
        <taxon>Haplorrhini</taxon>
        <taxon>Catarrhini</taxon>
        <taxon>Hominidae</taxon>
        <taxon>Homo</taxon>
    </lineage>
</organism>
<name>BARX2_HUMAN</name>
<sequence length="279" mass="31188">MHCHAELRLSSPGQLKAARRRYKTFMIDEILSKETCDYFEKLSLYSVCPSLVVRPKPLHSCTGSPSLRAYPLLSVITRQPTVISHLVPATPGIAQALSCHQVTEAVSAEAPGGEALASSESETEQPTPRQKKPRRSRTIFTELQLMGLEKKFQKQKYLSTPDRLDLAQSLGLTQLQVKTWYQNRRMKWKKMVLKGGQEAPTKPKGRPKKNSIPTSEEIEAEEKMNSQAQGQEQLEPSQGQEELCEAQEPKARDVPLEMAEPPDPPQELPIPSSEPPPLS</sequence>
<feature type="chain" id="PRO_0000048838" description="Homeobox protein BarH-like 2">
    <location>
        <begin position="1"/>
        <end position="279"/>
    </location>
</feature>
<feature type="DNA-binding region" description="Homeobox" evidence="2">
    <location>
        <begin position="133"/>
        <end position="192"/>
    </location>
</feature>
<feature type="region of interest" description="Disordered" evidence="3">
    <location>
        <begin position="110"/>
        <end position="137"/>
    </location>
</feature>
<feature type="region of interest" description="Disordered" evidence="3">
    <location>
        <begin position="194"/>
        <end position="279"/>
    </location>
</feature>
<feature type="compositionally biased region" description="Polar residues" evidence="3">
    <location>
        <begin position="118"/>
        <end position="128"/>
    </location>
</feature>
<feature type="compositionally biased region" description="Polar residues" evidence="3">
    <location>
        <begin position="225"/>
        <end position="240"/>
    </location>
</feature>
<feature type="compositionally biased region" description="Pro residues" evidence="3">
    <location>
        <begin position="261"/>
        <end position="279"/>
    </location>
</feature>
<evidence type="ECO:0000250" key="1"/>
<evidence type="ECO:0000255" key="2">
    <source>
        <dbReference type="PROSITE-ProRule" id="PRU00108"/>
    </source>
</evidence>
<evidence type="ECO:0000256" key="3">
    <source>
        <dbReference type="SAM" id="MobiDB-lite"/>
    </source>
</evidence>
<evidence type="ECO:0000305" key="4"/>
<accession>Q9UMQ3</accession>
<accession>O43518</accession>
<accession>Q6NT51</accession>